<comment type="function">
    <text evidence="1">Together with the chaperonin GroEL, plays an essential role in assisting protein folding. The GroEL-GroES system forms a nano-cage that allows encapsulation of the non-native substrate proteins and provides a physical environment optimized to promote and accelerate protein folding. GroES binds to the apical surface of the GroEL ring, thereby capping the opening of the GroEL channel.</text>
</comment>
<comment type="subunit">
    <text evidence="1">Heptamer of 7 subunits arranged in a ring. Interacts with the chaperonin GroEL.</text>
</comment>
<comment type="subcellular location">
    <subcellularLocation>
        <location evidence="1">Cytoplasm</location>
    </subcellularLocation>
</comment>
<comment type="similarity">
    <text evidence="1">Belongs to the GroES chaperonin family.</text>
</comment>
<evidence type="ECO:0000255" key="1">
    <source>
        <dbReference type="HAMAP-Rule" id="MF_00580"/>
    </source>
</evidence>
<reference key="1">
    <citation type="journal article" date="2008" name="Proc. Natl. Acad. Sci. U.S.A.">
        <title>The genome of Cyanothece 51142, a unicellular diazotrophic cyanobacterium important in the marine nitrogen cycle.</title>
        <authorList>
            <person name="Welsh E.A."/>
            <person name="Liberton M."/>
            <person name="Stoeckel J."/>
            <person name="Loh T."/>
            <person name="Elvitigala T."/>
            <person name="Wang C."/>
            <person name="Wollam A."/>
            <person name="Fulton R.S."/>
            <person name="Clifton S.W."/>
            <person name="Jacobs J.M."/>
            <person name="Aurora R."/>
            <person name="Ghosh B.K."/>
            <person name="Sherman L.A."/>
            <person name="Smith R.D."/>
            <person name="Wilson R.K."/>
            <person name="Pakrasi H.B."/>
        </authorList>
    </citation>
    <scope>NUCLEOTIDE SEQUENCE [LARGE SCALE GENOMIC DNA]</scope>
    <source>
        <strain>ATCC 51142 / BH68</strain>
    </source>
</reference>
<feature type="chain" id="PRO_1000146898" description="Co-chaperonin GroES">
    <location>
        <begin position="1"/>
        <end position="103"/>
    </location>
</feature>
<dbReference type="EMBL" id="CP000806">
    <property type="protein sequence ID" value="ACB50693.1"/>
    <property type="molecule type" value="Genomic_DNA"/>
</dbReference>
<dbReference type="RefSeq" id="WP_008278381.1">
    <property type="nucleotide sequence ID" value="NC_010546.1"/>
</dbReference>
<dbReference type="SMR" id="B1WWG9"/>
<dbReference type="STRING" id="43989.cce_1343"/>
<dbReference type="KEGG" id="cyt:cce_1343"/>
<dbReference type="eggNOG" id="COG0234">
    <property type="taxonomic scope" value="Bacteria"/>
</dbReference>
<dbReference type="HOGENOM" id="CLU_132825_2_1_3"/>
<dbReference type="OrthoDB" id="9806791at2"/>
<dbReference type="Proteomes" id="UP000001203">
    <property type="component" value="Chromosome circular"/>
</dbReference>
<dbReference type="GO" id="GO:0005737">
    <property type="term" value="C:cytoplasm"/>
    <property type="evidence" value="ECO:0007669"/>
    <property type="project" value="UniProtKB-SubCell"/>
</dbReference>
<dbReference type="GO" id="GO:0005524">
    <property type="term" value="F:ATP binding"/>
    <property type="evidence" value="ECO:0007669"/>
    <property type="project" value="InterPro"/>
</dbReference>
<dbReference type="GO" id="GO:0046872">
    <property type="term" value="F:metal ion binding"/>
    <property type="evidence" value="ECO:0007669"/>
    <property type="project" value="TreeGrafter"/>
</dbReference>
<dbReference type="GO" id="GO:0044183">
    <property type="term" value="F:protein folding chaperone"/>
    <property type="evidence" value="ECO:0007669"/>
    <property type="project" value="InterPro"/>
</dbReference>
<dbReference type="GO" id="GO:0051087">
    <property type="term" value="F:protein-folding chaperone binding"/>
    <property type="evidence" value="ECO:0007669"/>
    <property type="project" value="TreeGrafter"/>
</dbReference>
<dbReference type="GO" id="GO:0051082">
    <property type="term" value="F:unfolded protein binding"/>
    <property type="evidence" value="ECO:0007669"/>
    <property type="project" value="TreeGrafter"/>
</dbReference>
<dbReference type="GO" id="GO:0051085">
    <property type="term" value="P:chaperone cofactor-dependent protein refolding"/>
    <property type="evidence" value="ECO:0007669"/>
    <property type="project" value="TreeGrafter"/>
</dbReference>
<dbReference type="CDD" id="cd00320">
    <property type="entry name" value="cpn10"/>
    <property type="match status" value="1"/>
</dbReference>
<dbReference type="FunFam" id="2.30.33.40:FF:000001">
    <property type="entry name" value="10 kDa chaperonin"/>
    <property type="match status" value="1"/>
</dbReference>
<dbReference type="Gene3D" id="2.30.33.40">
    <property type="entry name" value="GroES chaperonin"/>
    <property type="match status" value="1"/>
</dbReference>
<dbReference type="HAMAP" id="MF_00580">
    <property type="entry name" value="CH10"/>
    <property type="match status" value="1"/>
</dbReference>
<dbReference type="InterPro" id="IPR020818">
    <property type="entry name" value="Chaperonin_GroES"/>
</dbReference>
<dbReference type="InterPro" id="IPR037124">
    <property type="entry name" value="Chaperonin_GroES_sf"/>
</dbReference>
<dbReference type="InterPro" id="IPR018369">
    <property type="entry name" value="Chaprnonin_Cpn10_CS"/>
</dbReference>
<dbReference type="InterPro" id="IPR011032">
    <property type="entry name" value="GroES-like_sf"/>
</dbReference>
<dbReference type="NCBIfam" id="NF001527">
    <property type="entry name" value="PRK00364.1-2"/>
    <property type="match status" value="1"/>
</dbReference>
<dbReference type="NCBIfam" id="NF001530">
    <property type="entry name" value="PRK00364.1-6"/>
    <property type="match status" value="1"/>
</dbReference>
<dbReference type="NCBIfam" id="NF001531">
    <property type="entry name" value="PRK00364.2-2"/>
    <property type="match status" value="1"/>
</dbReference>
<dbReference type="NCBIfam" id="NF001533">
    <property type="entry name" value="PRK00364.2-4"/>
    <property type="match status" value="1"/>
</dbReference>
<dbReference type="NCBIfam" id="NF001534">
    <property type="entry name" value="PRK00364.2-5"/>
    <property type="match status" value="1"/>
</dbReference>
<dbReference type="PANTHER" id="PTHR10772">
    <property type="entry name" value="10 KDA HEAT SHOCK PROTEIN"/>
    <property type="match status" value="1"/>
</dbReference>
<dbReference type="PANTHER" id="PTHR10772:SF58">
    <property type="entry name" value="CO-CHAPERONIN GROES"/>
    <property type="match status" value="1"/>
</dbReference>
<dbReference type="Pfam" id="PF00166">
    <property type="entry name" value="Cpn10"/>
    <property type="match status" value="1"/>
</dbReference>
<dbReference type="PRINTS" id="PR00297">
    <property type="entry name" value="CHAPERONIN10"/>
</dbReference>
<dbReference type="SMART" id="SM00883">
    <property type="entry name" value="Cpn10"/>
    <property type="match status" value="1"/>
</dbReference>
<dbReference type="SUPFAM" id="SSF50129">
    <property type="entry name" value="GroES-like"/>
    <property type="match status" value="1"/>
</dbReference>
<dbReference type="PROSITE" id="PS00681">
    <property type="entry name" value="CHAPERONINS_CPN10"/>
    <property type="match status" value="1"/>
</dbReference>
<accession>B1WWG9</accession>
<organism>
    <name type="scientific">Crocosphaera subtropica (strain ATCC 51142 / BH68)</name>
    <name type="common">Cyanothece sp. (strain ATCC 51142)</name>
    <dbReference type="NCBI Taxonomy" id="43989"/>
    <lineage>
        <taxon>Bacteria</taxon>
        <taxon>Bacillati</taxon>
        <taxon>Cyanobacteriota</taxon>
        <taxon>Cyanophyceae</taxon>
        <taxon>Oscillatoriophycideae</taxon>
        <taxon>Chroococcales</taxon>
        <taxon>Aphanothecaceae</taxon>
        <taxon>Crocosphaera</taxon>
        <taxon>Crocosphaera subtropica</taxon>
    </lineage>
</organism>
<sequence>MAAISINVSTVKPLGDRIFVKVSPAEEKTAGGILLPDNAQEKPQIGEVVAVGPGKRNDDGSRSELDVKVGDKVLYSKYAGTDVKLSGEDYVLLSEKDILASVA</sequence>
<name>CH10_CROS5</name>
<keyword id="KW-0143">Chaperone</keyword>
<keyword id="KW-0963">Cytoplasm</keyword>
<keyword id="KW-1185">Reference proteome</keyword>
<gene>
    <name evidence="1" type="primary">groES</name>
    <name evidence="1" type="synonym">groS</name>
    <name type="ordered locus">cce_1343</name>
</gene>
<protein>
    <recommendedName>
        <fullName evidence="1">Co-chaperonin GroES</fullName>
    </recommendedName>
    <alternativeName>
        <fullName evidence="1">10 kDa chaperonin</fullName>
    </alternativeName>
    <alternativeName>
        <fullName evidence="1">Chaperonin-10</fullName>
        <shortName evidence="1">Cpn10</shortName>
    </alternativeName>
</protein>
<proteinExistence type="inferred from homology"/>